<protein>
    <recommendedName>
        <fullName evidence="8">Acyl-[acyl-carrier-protein] hydrolase FATB2, chloroplastic</fullName>
        <shortName evidence="7">CvFatB2</shortName>
        <ecNumber evidence="4 5 6">3.1.2.-</ecNumber>
    </recommendedName>
    <alternativeName>
        <fullName evidence="9">Myristoyl-[acyl-carrier-protein] thioesterase</fullName>
    </alternativeName>
    <alternativeName>
        <fullName evidence="9">Palmitoyl-[acyl-carrier-protein] thioesterase</fullName>
    </alternativeName>
</protein>
<accession>G3ESV0</accession>
<comment type="function">
    <text evidence="4 5 6 9">Plays an essential role in chain termination during de novo fatty acid synthesis (Probable). Possesses thioesterase activity for medium chain acyl-ACPs. Substrate preference is 14:0 &gt; 16:0 &gt; 16:1 (PubMed:21831316, PubMed:29491418, PubMed:30409825).</text>
</comment>
<comment type="catalytic activity">
    <reaction evidence="4 5 6">
        <text>tetradecanoyl-[ACP] + H2O = tetradecanoate + holo-[ACP] + H(+)</text>
        <dbReference type="Rhea" id="RHEA:30123"/>
        <dbReference type="Rhea" id="RHEA-COMP:9648"/>
        <dbReference type="Rhea" id="RHEA-COMP:9685"/>
        <dbReference type="ChEBI" id="CHEBI:15377"/>
        <dbReference type="ChEBI" id="CHEBI:15378"/>
        <dbReference type="ChEBI" id="CHEBI:30807"/>
        <dbReference type="ChEBI" id="CHEBI:64479"/>
        <dbReference type="ChEBI" id="CHEBI:78477"/>
    </reaction>
    <physiologicalReaction direction="left-to-right" evidence="4 5 6">
        <dbReference type="Rhea" id="RHEA:30124"/>
    </physiologicalReaction>
</comment>
<comment type="catalytic activity">
    <reaction evidence="4 5 6">
        <text>hexadecanoyl-[ACP] + H2O = hexadecanoate + holo-[ACP] + H(+)</text>
        <dbReference type="Rhea" id="RHEA:41932"/>
        <dbReference type="Rhea" id="RHEA-COMP:9652"/>
        <dbReference type="Rhea" id="RHEA-COMP:9685"/>
        <dbReference type="ChEBI" id="CHEBI:7896"/>
        <dbReference type="ChEBI" id="CHEBI:15377"/>
        <dbReference type="ChEBI" id="CHEBI:15378"/>
        <dbReference type="ChEBI" id="CHEBI:64479"/>
        <dbReference type="ChEBI" id="CHEBI:78483"/>
    </reaction>
    <physiologicalReaction direction="left-to-right" evidence="4 5 6">
        <dbReference type="Rhea" id="RHEA:41933"/>
    </physiologicalReaction>
</comment>
<comment type="subcellular location">
    <subcellularLocation>
        <location evidence="2">Plastid</location>
        <location evidence="2">Chloroplast</location>
    </subcellularLocation>
</comment>
<comment type="similarity">
    <text evidence="8">Belongs to the acyl-ACP thioesterase family.</text>
</comment>
<proteinExistence type="evidence at protein level"/>
<keyword id="KW-0150">Chloroplast</keyword>
<keyword id="KW-0275">Fatty acid biosynthesis</keyword>
<keyword id="KW-0276">Fatty acid metabolism</keyword>
<keyword id="KW-0378">Hydrolase</keyword>
<keyword id="KW-0444">Lipid biosynthesis</keyword>
<keyword id="KW-0443">Lipid metabolism</keyword>
<keyword id="KW-0934">Plastid</keyword>
<keyword id="KW-0809">Transit peptide</keyword>
<evidence type="ECO:0000250" key="1">
    <source>
        <dbReference type="UniProtKB" id="Q41635"/>
    </source>
</evidence>
<evidence type="ECO:0000255" key="2"/>
<evidence type="ECO:0000256" key="3">
    <source>
        <dbReference type="SAM" id="MobiDB-lite"/>
    </source>
</evidence>
<evidence type="ECO:0000269" key="4">
    <source>
    </source>
</evidence>
<evidence type="ECO:0000269" key="5">
    <source>
    </source>
</evidence>
<evidence type="ECO:0000269" key="6">
    <source>
    </source>
</evidence>
<evidence type="ECO:0000303" key="7">
    <source>
    </source>
</evidence>
<evidence type="ECO:0000305" key="8"/>
<evidence type="ECO:0000305" key="9">
    <source>
    </source>
</evidence>
<feature type="transit peptide" description="Chloroplast" evidence="2">
    <location>
        <begin position="1" status="less than"/>
        <end position="46"/>
    </location>
</feature>
<feature type="chain" id="PRO_0000450102" description="Acyl-[acyl-carrier-protein] hydrolase FATB2, chloroplastic">
    <location>
        <begin position="47"/>
        <end position="412"/>
    </location>
</feature>
<feature type="region of interest" description="Disordered" evidence="3">
    <location>
        <begin position="1"/>
        <end position="78"/>
    </location>
</feature>
<feature type="compositionally biased region" description="Low complexity" evidence="3">
    <location>
        <begin position="1"/>
        <end position="13"/>
    </location>
</feature>
<feature type="compositionally biased region" description="Low complexity" evidence="3">
    <location>
        <begin position="56"/>
        <end position="66"/>
    </location>
</feature>
<feature type="active site" evidence="1">
    <location>
        <position position="311"/>
    </location>
</feature>
<feature type="active site" evidence="1">
    <location>
        <position position="313"/>
    </location>
</feature>
<feature type="active site" evidence="2">
    <location>
        <position position="348"/>
    </location>
</feature>
<feature type="mutagenesis site" description="Loss of thioesterase activity." evidence="6">
    <original>D</original>
    <variation>A</variation>
    <variation>E</variation>
    <variation>N</variation>
    <location>
        <position position="309"/>
    </location>
</feature>
<feature type="mutagenesis site" description="Loss of thioesterase activity." evidence="6">
    <original>N</original>
    <variation>A</variation>
    <location>
        <position position="311"/>
    </location>
</feature>
<feature type="mutagenesis site" description="Loss of thioesterase activity." evidence="6">
    <original>H</original>
    <variation>A</variation>
    <location>
        <position position="313"/>
    </location>
</feature>
<feature type="mutagenesis site" description="Loss of thioesterase activity." evidence="6">
    <original>E</original>
    <variation>A</variation>
    <variation>D</variation>
    <variation>Q</variation>
    <location>
        <position position="347"/>
    </location>
</feature>
<feature type="mutagenesis site" description="Decreases thioesterase activity 2-fold." evidence="6">
    <original>C</original>
    <variation>A</variation>
    <location>
        <position position="348"/>
    </location>
</feature>
<feature type="mutagenesis site" description="Increases thioesterase activity 2-fold." evidence="6">
    <original>C</original>
    <variation>S</variation>
    <location>
        <position position="348"/>
    </location>
</feature>
<feature type="non-terminal residue">
    <location>
        <position position="1"/>
    </location>
</feature>
<sequence>TAASSAFFPVPSADTSSRPGKLGNGPSSFSPLKPKSIPNGGLQVKASASAPPKINGSSVGLKSGGLKTHDDAPSAPPPRTFINQLPDWSMLLAAITTAFLAAEKQWMMLDRKPKRLDMLEDPFGLGRVVQDGLVFRQNFSIRSYEIGADRTASIETVMNHLQETALNHVKTAGLSNDGFGRTPEMYKRDLIWVVAKMQVMVNRYPTWGDTVEVNTWVAKSGKNGMRRDWLISDCNTGEILTRASSVWVMMNQKTRKLSKIPDEVRREIEPHFVDSAPVIEDDDRKLPKLDEKSADSIRKGLTPRWNDLDVNQHVNNAKYIGWILESTPPEVLETQELCSLTLEYRRECGRESVLESLTAVDPSGEGYGSQFQHLLRLEDGGEIVKGRTEWRPKNAGINGVVPSEESSPGDYS</sequence>
<reference key="1">
    <citation type="journal article" date="2011" name="BMC Biochem.">
        <title>Phylogenetic and experimental characterization of an acyl-ACP thioesterase family reveals significant diversity in enzymatic specificity and activity.</title>
        <authorList>
            <person name="Jing F."/>
            <person name="Cantu D.C."/>
            <person name="Tvaruzkova J."/>
            <person name="Chipman J.P."/>
            <person name="Nikolau B.J."/>
            <person name="Yandeau-Nelson M.D."/>
            <person name="Reilly P.J."/>
        </authorList>
    </citation>
    <scope>NUCLEOTIDE SEQUENCE [MRNA]</scope>
    <scope>FUNCTION</scope>
    <scope>CATALYTIC ACTIVITY</scope>
</reference>
<reference key="2">
    <citation type="journal article" date="2018" name="Nat. Commun.">
        <title>Two distinct domains contribute to the substrate acyl chain length selectivity of plant acyl-ACP thioesterase.</title>
        <authorList>
            <person name="Jing F."/>
            <person name="Zhao L."/>
            <person name="Yandeau-Nelson M.D."/>
            <person name="Nikolau B.J."/>
        </authorList>
    </citation>
    <scope>FUNCTION</scope>
    <scope>CATALYTIC ACTIVITY</scope>
</reference>
<reference key="3">
    <citation type="journal article" date="2018" name="Biochem. J.">
        <title>Identification of active site residues implies a two-step catalytic mechanism for acyl-ACP thioesterase.</title>
        <authorList>
            <person name="Jing F."/>
            <person name="Yandeau-Nelson M.D."/>
            <person name="Nikolau B.J."/>
        </authorList>
    </citation>
    <scope>FUNCTION</scope>
    <scope>CATALYTIC ACTIVITY</scope>
    <scope>MUTAGENESIS OF ASP-309; ASN-311; HIS-313; GLU-347 AND CYS-348</scope>
</reference>
<dbReference type="EC" id="3.1.2.-" evidence="4 5 6"/>
<dbReference type="EMBL" id="JF338907">
    <property type="protein sequence ID" value="AEM72523.1"/>
    <property type="molecule type" value="mRNA"/>
</dbReference>
<dbReference type="SMR" id="G3ESV0"/>
<dbReference type="BRENDA" id="3.1.2.14">
    <property type="organism ID" value="16463"/>
</dbReference>
<dbReference type="GO" id="GO:0009507">
    <property type="term" value="C:chloroplast"/>
    <property type="evidence" value="ECO:0007669"/>
    <property type="project" value="UniProtKB-SubCell"/>
</dbReference>
<dbReference type="GO" id="GO:0000036">
    <property type="term" value="F:acyl carrier activity"/>
    <property type="evidence" value="ECO:0007669"/>
    <property type="project" value="TreeGrafter"/>
</dbReference>
<dbReference type="GO" id="GO:0016297">
    <property type="term" value="F:fatty acyl-[ACP] hydrolase activity"/>
    <property type="evidence" value="ECO:0007669"/>
    <property type="project" value="InterPro"/>
</dbReference>
<dbReference type="CDD" id="cd00586">
    <property type="entry name" value="4HBT"/>
    <property type="match status" value="1"/>
</dbReference>
<dbReference type="FunFam" id="3.10.129.10:FF:000014">
    <property type="entry name" value="Acyl-[acyl-carrier-protein] hydrolase"/>
    <property type="match status" value="1"/>
</dbReference>
<dbReference type="Gene3D" id="3.10.129.10">
    <property type="entry name" value="Hotdog Thioesterase"/>
    <property type="match status" value="1"/>
</dbReference>
<dbReference type="InterPro" id="IPR021113">
    <property type="entry name" value="Acyl-ACP-thioesterase_N"/>
</dbReference>
<dbReference type="InterPro" id="IPR049427">
    <property type="entry name" value="Acyl-ACP_TE_C"/>
</dbReference>
<dbReference type="InterPro" id="IPR002864">
    <property type="entry name" value="Acyl-ACP_thioesterase_NHD"/>
</dbReference>
<dbReference type="InterPro" id="IPR045023">
    <property type="entry name" value="FATA/B"/>
</dbReference>
<dbReference type="InterPro" id="IPR029069">
    <property type="entry name" value="HotDog_dom_sf"/>
</dbReference>
<dbReference type="PANTHER" id="PTHR31727">
    <property type="entry name" value="OLEOYL-ACYL CARRIER PROTEIN THIOESTERASE 1, CHLOROPLASTIC"/>
    <property type="match status" value="1"/>
</dbReference>
<dbReference type="PANTHER" id="PTHR31727:SF2">
    <property type="entry name" value="PALMITOYL-ACYL CARRIER PROTEIN THIOESTERASE, CHLOROPLASTIC"/>
    <property type="match status" value="1"/>
</dbReference>
<dbReference type="Pfam" id="PF01643">
    <property type="entry name" value="Acyl-ACP_TE"/>
    <property type="match status" value="1"/>
</dbReference>
<dbReference type="Pfam" id="PF20791">
    <property type="entry name" value="Acyl-ACP_TE_C"/>
    <property type="match status" value="1"/>
</dbReference>
<dbReference type="Pfam" id="PF12590">
    <property type="entry name" value="Acyl-thio_N"/>
    <property type="match status" value="1"/>
</dbReference>
<dbReference type="SUPFAM" id="SSF54637">
    <property type="entry name" value="Thioesterase/thiol ester dehydrase-isomerase"/>
    <property type="match status" value="2"/>
</dbReference>
<gene>
    <name evidence="7" type="primary">FATB2</name>
</gene>
<organism>
    <name type="scientific">Cuphea viscosissima</name>
    <name type="common">Blue waxweed</name>
    <dbReference type="NCBI Taxonomy" id="857185"/>
    <lineage>
        <taxon>Eukaryota</taxon>
        <taxon>Viridiplantae</taxon>
        <taxon>Streptophyta</taxon>
        <taxon>Embryophyta</taxon>
        <taxon>Tracheophyta</taxon>
        <taxon>Spermatophyta</taxon>
        <taxon>Magnoliopsida</taxon>
        <taxon>eudicotyledons</taxon>
        <taxon>Gunneridae</taxon>
        <taxon>Pentapetalae</taxon>
        <taxon>rosids</taxon>
        <taxon>malvids</taxon>
        <taxon>Myrtales</taxon>
        <taxon>Lythraceae</taxon>
        <taxon>Cuphea</taxon>
    </lineage>
</organism>
<name>FATB2_CUPVI</name>